<protein>
    <recommendedName>
        <fullName evidence="1">Pescadillo homolog</fullName>
    </recommendedName>
    <alternativeName>
        <fullName evidence="1">Nucleolar protein 7 homolog</fullName>
    </alternativeName>
</protein>
<organism>
    <name type="scientific">Candida albicans (strain SC5314 / ATCC MYA-2876)</name>
    <name type="common">Yeast</name>
    <dbReference type="NCBI Taxonomy" id="237561"/>
    <lineage>
        <taxon>Eukaryota</taxon>
        <taxon>Fungi</taxon>
        <taxon>Dikarya</taxon>
        <taxon>Ascomycota</taxon>
        <taxon>Saccharomycotina</taxon>
        <taxon>Pichiomycetes</taxon>
        <taxon>Debaryomycetaceae</taxon>
        <taxon>Candida/Lodderomyces clade</taxon>
        <taxon>Candida</taxon>
    </lineage>
</organism>
<feature type="chain" id="PRO_0000370484" description="Pescadillo homolog">
    <location>
        <begin position="1"/>
        <end position="587"/>
    </location>
</feature>
<feature type="domain" description="BRCT" evidence="1">
    <location>
        <begin position="335"/>
        <end position="434"/>
    </location>
</feature>
<feature type="region of interest" description="Disordered" evidence="2">
    <location>
        <begin position="290"/>
        <end position="311"/>
    </location>
</feature>
<feature type="region of interest" description="Disordered" evidence="2">
    <location>
        <begin position="437"/>
        <end position="587"/>
    </location>
</feature>
<feature type="coiled-coil region" evidence="1">
    <location>
        <begin position="267"/>
        <end position="306"/>
    </location>
</feature>
<feature type="coiled-coil region" evidence="1">
    <location>
        <begin position="470"/>
        <end position="587"/>
    </location>
</feature>
<feature type="compositionally biased region" description="Acidic residues" evidence="2">
    <location>
        <begin position="295"/>
        <end position="311"/>
    </location>
</feature>
<feature type="compositionally biased region" description="Acidic residues" evidence="2">
    <location>
        <begin position="459"/>
        <end position="494"/>
    </location>
</feature>
<feature type="compositionally biased region" description="Basic and acidic residues" evidence="2">
    <location>
        <begin position="529"/>
        <end position="541"/>
    </location>
</feature>
<feature type="compositionally biased region" description="Basic and acidic residues" evidence="2">
    <location>
        <begin position="559"/>
        <end position="569"/>
    </location>
</feature>
<feature type="compositionally biased region" description="Basic and acidic residues" evidence="2">
    <location>
        <begin position="578"/>
        <end position="587"/>
    </location>
</feature>
<feature type="mutagenesis site" description="Temperature sensitive; impairs the transition from hyphal to yeast growth on rich yeast-inducing media." evidence="3">
    <original>W</original>
    <variation>R</variation>
    <location>
        <position position="416"/>
    </location>
</feature>
<keyword id="KW-0175">Coiled coil</keyword>
<keyword id="KW-0539">Nucleus</keyword>
<keyword id="KW-1185">Reference proteome</keyword>
<keyword id="KW-0690">Ribosome biogenesis</keyword>
<keyword id="KW-0698">rRNA processing</keyword>
<dbReference type="EMBL" id="CP017624">
    <property type="protein sequence ID" value="AOW27915.1"/>
    <property type="molecule type" value="Genomic_DNA"/>
</dbReference>
<dbReference type="SMR" id="Q59X38"/>
<dbReference type="BioGRID" id="1227199">
    <property type="interactions" value="2"/>
</dbReference>
<dbReference type="FunCoup" id="Q59X38">
    <property type="interactions" value="1392"/>
</dbReference>
<dbReference type="STRING" id="237561.Q59X38"/>
<dbReference type="EnsemblFungi" id="C2_09320C_A-T">
    <property type="protein sequence ID" value="C2_09320C_A-T-p1"/>
    <property type="gene ID" value="C2_09320C_A"/>
</dbReference>
<dbReference type="KEGG" id="cal:CAALFM_C209320CA"/>
<dbReference type="CGD" id="CAL0000200824">
    <property type="gene designation" value="PES1"/>
</dbReference>
<dbReference type="VEuPathDB" id="FungiDB:C2_09320C_A"/>
<dbReference type="eggNOG" id="KOG2481">
    <property type="taxonomic scope" value="Eukaryota"/>
</dbReference>
<dbReference type="HOGENOM" id="CLU_019619_1_1_1"/>
<dbReference type="InParanoid" id="Q59X38"/>
<dbReference type="OrthoDB" id="10264910at2759"/>
<dbReference type="PHI-base" id="PHI:2823"/>
<dbReference type="PRO" id="PR:Q59X38"/>
<dbReference type="Proteomes" id="UP000000559">
    <property type="component" value="Chromosome 2"/>
</dbReference>
<dbReference type="GO" id="GO:0005654">
    <property type="term" value="C:nucleoplasm"/>
    <property type="evidence" value="ECO:0007669"/>
    <property type="project" value="UniProtKB-SubCell"/>
</dbReference>
<dbReference type="GO" id="GO:0070545">
    <property type="term" value="C:PeBoW complex"/>
    <property type="evidence" value="ECO:0000318"/>
    <property type="project" value="GO_Central"/>
</dbReference>
<dbReference type="GO" id="GO:0030687">
    <property type="term" value="C:preribosome, large subunit precursor"/>
    <property type="evidence" value="ECO:0007669"/>
    <property type="project" value="UniProtKB-UniRule"/>
</dbReference>
<dbReference type="GO" id="GO:0070180">
    <property type="term" value="F:large ribosomal subunit rRNA binding"/>
    <property type="evidence" value="ECO:0007669"/>
    <property type="project" value="EnsemblFungi"/>
</dbReference>
<dbReference type="GO" id="GO:0043021">
    <property type="term" value="F:ribonucleoprotein complex binding"/>
    <property type="evidence" value="ECO:0007669"/>
    <property type="project" value="UniProtKB-UniRule"/>
</dbReference>
<dbReference type="GO" id="GO:0003723">
    <property type="term" value="F:RNA binding"/>
    <property type="evidence" value="ECO:0000318"/>
    <property type="project" value="GO_Central"/>
</dbReference>
<dbReference type="GO" id="GO:0009267">
    <property type="term" value="P:cellular response to starvation"/>
    <property type="evidence" value="ECO:0000315"/>
    <property type="project" value="CGD"/>
</dbReference>
<dbReference type="GO" id="GO:0030447">
    <property type="term" value="P:filamentous growth"/>
    <property type="evidence" value="ECO:0000315"/>
    <property type="project" value="CGD"/>
</dbReference>
<dbReference type="GO" id="GO:0000466">
    <property type="term" value="P:maturation of 5.8S rRNA from tricistronic rRNA transcript (SSU-rRNA, 5.8S rRNA, LSU-rRNA)"/>
    <property type="evidence" value="ECO:0007669"/>
    <property type="project" value="UniProtKB-UniRule"/>
</dbReference>
<dbReference type="GO" id="GO:0000463">
    <property type="term" value="P:maturation of LSU-rRNA from tricistronic rRNA transcript (SSU-rRNA, 5.8S rRNA, LSU-rRNA)"/>
    <property type="evidence" value="ECO:0000318"/>
    <property type="project" value="GO_Central"/>
</dbReference>
<dbReference type="GO" id="GO:0000462">
    <property type="term" value="P:maturation of SSU-rRNA from tricistronic rRNA transcript (SSU-rRNA, 5.8S rRNA, LSU-rRNA)"/>
    <property type="evidence" value="ECO:0007669"/>
    <property type="project" value="EnsemblFungi"/>
</dbReference>
<dbReference type="GO" id="GO:0060258">
    <property type="term" value="P:negative regulation of filamentous growth"/>
    <property type="evidence" value="ECO:0000315"/>
    <property type="project" value="CGD"/>
</dbReference>
<dbReference type="CDD" id="cd17709">
    <property type="entry name" value="BRCT_pescadillo_like"/>
    <property type="match status" value="1"/>
</dbReference>
<dbReference type="FunFam" id="3.40.50.10190:FF:000067">
    <property type="entry name" value="Pescadillo homolog"/>
    <property type="match status" value="1"/>
</dbReference>
<dbReference type="Gene3D" id="3.40.50.10190">
    <property type="entry name" value="BRCT domain"/>
    <property type="match status" value="1"/>
</dbReference>
<dbReference type="HAMAP" id="MF_03028">
    <property type="entry name" value="Pescadillo"/>
    <property type="match status" value="1"/>
</dbReference>
<dbReference type="InterPro" id="IPR001357">
    <property type="entry name" value="BRCT_dom"/>
</dbReference>
<dbReference type="InterPro" id="IPR036420">
    <property type="entry name" value="BRCT_dom_sf"/>
</dbReference>
<dbReference type="InterPro" id="IPR010613">
    <property type="entry name" value="PES"/>
</dbReference>
<dbReference type="PANTHER" id="PTHR12221">
    <property type="entry name" value="PESCADILLO - RELATED"/>
    <property type="match status" value="1"/>
</dbReference>
<dbReference type="PANTHER" id="PTHR12221:SF6">
    <property type="entry name" value="PESCADILLO HOMOLOG"/>
    <property type="match status" value="1"/>
</dbReference>
<dbReference type="Pfam" id="PF16589">
    <property type="entry name" value="BRCT_2"/>
    <property type="match status" value="1"/>
</dbReference>
<dbReference type="Pfam" id="PF06732">
    <property type="entry name" value="Pescadillo_N"/>
    <property type="match status" value="1"/>
</dbReference>
<dbReference type="SMART" id="SM00292">
    <property type="entry name" value="BRCT"/>
    <property type="match status" value="1"/>
</dbReference>
<dbReference type="SUPFAM" id="SSF52113">
    <property type="entry name" value="BRCT domain"/>
    <property type="match status" value="1"/>
</dbReference>
<dbReference type="PROSITE" id="PS50172">
    <property type="entry name" value="BRCT"/>
    <property type="match status" value="1"/>
</dbReference>
<name>PESC_CANAL</name>
<gene>
    <name evidence="1" type="primary">NOP7</name>
    <name type="ordered locus">CAALFM_C209320CA</name>
    <name type="ORF">CaO19.11574</name>
    <name type="ORF">CaO19.4093</name>
</gene>
<reference key="1">
    <citation type="journal article" date="2004" name="Proc. Natl. Acad. Sci. U.S.A.">
        <title>The diploid genome sequence of Candida albicans.</title>
        <authorList>
            <person name="Jones T."/>
            <person name="Federspiel N.A."/>
            <person name="Chibana H."/>
            <person name="Dungan J."/>
            <person name="Kalman S."/>
            <person name="Magee B.B."/>
            <person name="Newport G."/>
            <person name="Thorstenson Y.R."/>
            <person name="Agabian N."/>
            <person name="Magee P.T."/>
            <person name="Davis R.W."/>
            <person name="Scherer S."/>
        </authorList>
    </citation>
    <scope>NUCLEOTIDE SEQUENCE [LARGE SCALE GENOMIC DNA]</scope>
    <source>
        <strain>SC5314 / ATCC MYA-2876</strain>
    </source>
</reference>
<reference key="2">
    <citation type="journal article" date="2007" name="Genome Biol.">
        <title>Assembly of the Candida albicans genome into sixteen supercontigs aligned on the eight chromosomes.</title>
        <authorList>
            <person name="van het Hoog M."/>
            <person name="Rast T.J."/>
            <person name="Martchenko M."/>
            <person name="Grindle S."/>
            <person name="Dignard D."/>
            <person name="Hogues H."/>
            <person name="Cuomo C."/>
            <person name="Berriman M."/>
            <person name="Scherer S."/>
            <person name="Magee B.B."/>
            <person name="Whiteway M."/>
            <person name="Chibana H."/>
            <person name="Nantel A."/>
            <person name="Magee P.T."/>
        </authorList>
    </citation>
    <scope>GENOME REANNOTATION</scope>
    <source>
        <strain>SC5314 / ATCC MYA-2876</strain>
    </source>
</reference>
<reference key="3">
    <citation type="journal article" date="2013" name="Genome Biol.">
        <title>Assembly of a phased diploid Candida albicans genome facilitates allele-specific measurements and provides a simple model for repeat and indel structure.</title>
        <authorList>
            <person name="Muzzey D."/>
            <person name="Schwartz K."/>
            <person name="Weissman J.S."/>
            <person name="Sherlock G."/>
        </authorList>
    </citation>
    <scope>NUCLEOTIDE SEQUENCE [LARGE SCALE GENOMIC DNA]</scope>
    <scope>GENOME REANNOTATION</scope>
    <source>
        <strain>SC5314 / ATCC MYA-2876</strain>
    </source>
</reference>
<reference key="4">
    <citation type="journal article" date="2008" name="Proc. Natl. Acad. Sci. U.S.A.">
        <title>The Candida albicans pescadillo homolog is required for normal hypha-to-yeast morphogenesis and yeast proliferation.</title>
        <authorList>
            <person name="Shen J."/>
            <person name="Cowen L.E."/>
            <person name="Griffin A.M."/>
            <person name="Chan L."/>
            <person name="Koehler J.R."/>
        </authorList>
    </citation>
    <scope>FUNCTION</scope>
    <scope>DEVELOPMENTAL STAGE</scope>
    <scope>MUTAGENESIS OF TRP-416</scope>
</reference>
<proteinExistence type="evidence at protein level"/>
<comment type="function">
    <text evidence="1 3">Component of the NOP7 complex, which is required for maturation of the 25S and 5.8S ribosomal RNAs and formation of the 60S ribosome (By similarity). Required for the transition from hyphal to yeast growth.</text>
</comment>
<comment type="subunit">
    <text evidence="1">Component of the NOP7 complex, composed of ERB1, NOP7 and YTM1. The complex is held together by ERB1, which interacts with NOP7 via its N-terminal domain and with YTM1 via a high-affinity interaction between the seven-bladed beta-propeller domains of the 2 proteins. The NOP7 complex associates with the 66S pre-ribosome.</text>
</comment>
<comment type="subcellular location">
    <subcellularLocation>
        <location evidence="1">Nucleus</location>
        <location evidence="1">Nucleolus</location>
    </subcellularLocation>
    <subcellularLocation>
        <location evidence="1">Nucleus</location>
        <location evidence="1">Nucleoplasm</location>
    </subcellularLocation>
</comment>
<comment type="developmental stage">
    <text evidence="3">Expressed under both yeast and hyphal conditions of growth.</text>
</comment>
<comment type="similarity">
    <text evidence="1">Belongs to the pescadillo family.</text>
</comment>
<accession>Q59X38</accession>
<accession>A0A1D8PID8</accession>
<sequence>MARIKKRGTTGNAKNFITRTQAIKKLQISLADFRRLCIFKGIYPREPRNKKKANKGSTAPVTFYYSKDIQYLLHEPVLDKFRQHKTFAKKLQKALGRGEVSDAYKLDQHRPKYTLNHIIKERYPTFADALRDLDDPLNMLFLFANMPATDKVSAKVVSEAEKLCNQWLAYVAKERCLKKVFVSIKGVYYQATVKGQEIRWLIPYKFPTNIPTDVDFRIMLTFLEFYSTLVHFVLYKLYNEAGLIYPPIIEKSIGLSGYVLQDKDAPLKKKEEKNDEEGKNLSKKELNKAIKADQEQQENDEQDNNNGESVEDIELDEFTSTKEDSLLQPSKYASSTAELFSKFIFYIGREVPLDILEFCILSCGGKIISEIAIDDLKINDPEAYKKLNLSNITHQIIDRPKILQKVPGRTYVQPQWVFDSINKQELINVNEYAAGETLPPHLSPWGDAGGYDPNKEVEKEDGEAEEDTDEEEEEVEIEDGDEDQEDEEEEEDEDLKAQKELELEAAGVKFSEINEEDKKSHSKKSKGTSNKEADEEKELKKIMMSNKQKKLFKKMQYGIEKKENREKQLTKKKKQLNKKKEQLKKLN</sequence>
<evidence type="ECO:0000255" key="1">
    <source>
        <dbReference type="HAMAP-Rule" id="MF_03028"/>
    </source>
</evidence>
<evidence type="ECO:0000256" key="2">
    <source>
        <dbReference type="SAM" id="MobiDB-lite"/>
    </source>
</evidence>
<evidence type="ECO:0000269" key="3">
    <source>
    </source>
</evidence>